<sequence length="86" mass="10011">MERNNRKVLVGRVVSDKMDKTITVVVETKRNHPVYGKRINYSKKYKAHDENNVAKEGDIVRIMETRPLSATKRFRLVEVVEEAVII</sequence>
<keyword id="KW-0687">Ribonucleoprotein</keyword>
<keyword id="KW-0689">Ribosomal protein</keyword>
<keyword id="KW-0694">RNA-binding</keyword>
<keyword id="KW-0699">rRNA-binding</keyword>
<feature type="chain" id="PRO_1000055034" description="Small ribosomal subunit protein uS17">
    <location>
        <begin position="1"/>
        <end position="86"/>
    </location>
</feature>
<protein>
    <recommendedName>
        <fullName evidence="1">Small ribosomal subunit protein uS17</fullName>
    </recommendedName>
    <alternativeName>
        <fullName evidence="2">30S ribosomal protein S17</fullName>
    </alternativeName>
</protein>
<comment type="function">
    <text evidence="1">One of the primary rRNA binding proteins, it binds specifically to the 5'-end of 16S ribosomal RNA.</text>
</comment>
<comment type="subunit">
    <text evidence="1">Part of the 30S ribosomal subunit.</text>
</comment>
<comment type="similarity">
    <text evidence="1">Belongs to the universal ribosomal protein uS17 family.</text>
</comment>
<reference key="1">
    <citation type="journal article" date="2007" name="PLoS ONE">
        <title>A glimpse of streptococcal toxic shock syndrome from comparative genomics of S. suis 2 Chinese isolates.</title>
        <authorList>
            <person name="Chen C."/>
            <person name="Tang J."/>
            <person name="Dong W."/>
            <person name="Wang C."/>
            <person name="Feng Y."/>
            <person name="Wang J."/>
            <person name="Zheng F."/>
            <person name="Pan X."/>
            <person name="Liu D."/>
            <person name="Li M."/>
            <person name="Song Y."/>
            <person name="Zhu X."/>
            <person name="Sun H."/>
            <person name="Feng T."/>
            <person name="Guo Z."/>
            <person name="Ju A."/>
            <person name="Ge J."/>
            <person name="Dong Y."/>
            <person name="Sun W."/>
            <person name="Jiang Y."/>
            <person name="Wang J."/>
            <person name="Yan J."/>
            <person name="Yang H."/>
            <person name="Wang X."/>
            <person name="Gao G.F."/>
            <person name="Yang R."/>
            <person name="Wang J."/>
            <person name="Yu J."/>
        </authorList>
    </citation>
    <scope>NUCLEOTIDE SEQUENCE [LARGE SCALE GENOMIC DNA]</scope>
    <source>
        <strain>05ZYH33</strain>
    </source>
</reference>
<evidence type="ECO:0000255" key="1">
    <source>
        <dbReference type="HAMAP-Rule" id="MF_01345"/>
    </source>
</evidence>
<evidence type="ECO:0000305" key="2"/>
<proteinExistence type="inferred from homology"/>
<name>RS17_STRSY</name>
<gene>
    <name evidence="1" type="primary">rpsQ</name>
    <name type="ordered locus">SSU05_0080</name>
</gene>
<dbReference type="EMBL" id="CP000407">
    <property type="protein sequence ID" value="ABP89052.1"/>
    <property type="molecule type" value="Genomic_DNA"/>
</dbReference>
<dbReference type="SMR" id="A4VSG3"/>
<dbReference type="STRING" id="391295.SSU05_0080"/>
<dbReference type="KEGG" id="ssu:SSU05_0080"/>
<dbReference type="eggNOG" id="COG0186">
    <property type="taxonomic scope" value="Bacteria"/>
</dbReference>
<dbReference type="HOGENOM" id="CLU_073626_1_0_9"/>
<dbReference type="GO" id="GO:0022627">
    <property type="term" value="C:cytosolic small ribosomal subunit"/>
    <property type="evidence" value="ECO:0007669"/>
    <property type="project" value="TreeGrafter"/>
</dbReference>
<dbReference type="GO" id="GO:0019843">
    <property type="term" value="F:rRNA binding"/>
    <property type="evidence" value="ECO:0007669"/>
    <property type="project" value="UniProtKB-UniRule"/>
</dbReference>
<dbReference type="GO" id="GO:0003735">
    <property type="term" value="F:structural constituent of ribosome"/>
    <property type="evidence" value="ECO:0007669"/>
    <property type="project" value="InterPro"/>
</dbReference>
<dbReference type="GO" id="GO:0006412">
    <property type="term" value="P:translation"/>
    <property type="evidence" value="ECO:0007669"/>
    <property type="project" value="UniProtKB-UniRule"/>
</dbReference>
<dbReference type="CDD" id="cd00364">
    <property type="entry name" value="Ribosomal_uS17"/>
    <property type="match status" value="1"/>
</dbReference>
<dbReference type="FunFam" id="2.40.50.140:FF:000026">
    <property type="entry name" value="30S ribosomal protein S17"/>
    <property type="match status" value="1"/>
</dbReference>
<dbReference type="Gene3D" id="2.40.50.140">
    <property type="entry name" value="Nucleic acid-binding proteins"/>
    <property type="match status" value="1"/>
</dbReference>
<dbReference type="HAMAP" id="MF_01345_B">
    <property type="entry name" value="Ribosomal_uS17_B"/>
    <property type="match status" value="1"/>
</dbReference>
<dbReference type="InterPro" id="IPR012340">
    <property type="entry name" value="NA-bd_OB-fold"/>
</dbReference>
<dbReference type="InterPro" id="IPR000266">
    <property type="entry name" value="Ribosomal_uS17"/>
</dbReference>
<dbReference type="InterPro" id="IPR019984">
    <property type="entry name" value="Ribosomal_uS17_bact/chlr"/>
</dbReference>
<dbReference type="InterPro" id="IPR019979">
    <property type="entry name" value="Ribosomal_uS17_CS"/>
</dbReference>
<dbReference type="NCBIfam" id="NF004123">
    <property type="entry name" value="PRK05610.1"/>
    <property type="match status" value="1"/>
</dbReference>
<dbReference type="NCBIfam" id="TIGR03635">
    <property type="entry name" value="uS17_bact"/>
    <property type="match status" value="1"/>
</dbReference>
<dbReference type="PANTHER" id="PTHR10744">
    <property type="entry name" value="40S RIBOSOMAL PROTEIN S11 FAMILY MEMBER"/>
    <property type="match status" value="1"/>
</dbReference>
<dbReference type="PANTHER" id="PTHR10744:SF1">
    <property type="entry name" value="SMALL RIBOSOMAL SUBUNIT PROTEIN US17M"/>
    <property type="match status" value="1"/>
</dbReference>
<dbReference type="Pfam" id="PF00366">
    <property type="entry name" value="Ribosomal_S17"/>
    <property type="match status" value="1"/>
</dbReference>
<dbReference type="PRINTS" id="PR00973">
    <property type="entry name" value="RIBOSOMALS17"/>
</dbReference>
<dbReference type="SUPFAM" id="SSF50249">
    <property type="entry name" value="Nucleic acid-binding proteins"/>
    <property type="match status" value="1"/>
</dbReference>
<dbReference type="PROSITE" id="PS00056">
    <property type="entry name" value="RIBOSOMAL_S17"/>
    <property type="match status" value="1"/>
</dbReference>
<accession>A4VSG3</accession>
<organism>
    <name type="scientific">Streptococcus suis (strain 05ZYH33)</name>
    <dbReference type="NCBI Taxonomy" id="391295"/>
    <lineage>
        <taxon>Bacteria</taxon>
        <taxon>Bacillati</taxon>
        <taxon>Bacillota</taxon>
        <taxon>Bacilli</taxon>
        <taxon>Lactobacillales</taxon>
        <taxon>Streptococcaceae</taxon>
        <taxon>Streptococcus</taxon>
    </lineage>
</organism>